<keyword id="KW-0963">Cytoplasm</keyword>
<keyword id="KW-0378">Hydrolase</keyword>
<keyword id="KW-0540">Nuclease</keyword>
<keyword id="KW-1185">Reference proteome</keyword>
<keyword id="KW-0690">Ribosome biogenesis</keyword>
<gene>
    <name type="ordered locus">Francci3_3213</name>
</gene>
<dbReference type="EC" id="3.1.-.-" evidence="1"/>
<dbReference type="EMBL" id="CP000249">
    <property type="protein sequence ID" value="ABD12570.1"/>
    <property type="molecule type" value="Genomic_DNA"/>
</dbReference>
<dbReference type="RefSeq" id="WP_011437598.1">
    <property type="nucleotide sequence ID" value="NC_007777.1"/>
</dbReference>
<dbReference type="SMR" id="Q2J822"/>
<dbReference type="STRING" id="106370.Francci3_3213"/>
<dbReference type="KEGG" id="fra:Francci3_3213"/>
<dbReference type="eggNOG" id="COG0816">
    <property type="taxonomic scope" value="Bacteria"/>
</dbReference>
<dbReference type="HOGENOM" id="CLU_098240_0_1_11"/>
<dbReference type="OrthoDB" id="9790539at2"/>
<dbReference type="PhylomeDB" id="Q2J822"/>
<dbReference type="Proteomes" id="UP000001937">
    <property type="component" value="Chromosome"/>
</dbReference>
<dbReference type="GO" id="GO:0005829">
    <property type="term" value="C:cytosol"/>
    <property type="evidence" value="ECO:0007669"/>
    <property type="project" value="TreeGrafter"/>
</dbReference>
<dbReference type="GO" id="GO:0004518">
    <property type="term" value="F:nuclease activity"/>
    <property type="evidence" value="ECO:0007669"/>
    <property type="project" value="UniProtKB-KW"/>
</dbReference>
<dbReference type="GO" id="GO:0000967">
    <property type="term" value="P:rRNA 5'-end processing"/>
    <property type="evidence" value="ECO:0007669"/>
    <property type="project" value="UniProtKB-UniRule"/>
</dbReference>
<dbReference type="CDD" id="cd16964">
    <property type="entry name" value="YqgF"/>
    <property type="match status" value="1"/>
</dbReference>
<dbReference type="Gene3D" id="3.30.420.140">
    <property type="entry name" value="YqgF/RNase H-like domain"/>
    <property type="match status" value="1"/>
</dbReference>
<dbReference type="HAMAP" id="MF_00651">
    <property type="entry name" value="Nuclease_YqgF"/>
    <property type="match status" value="1"/>
</dbReference>
<dbReference type="InterPro" id="IPR012337">
    <property type="entry name" value="RNaseH-like_sf"/>
</dbReference>
<dbReference type="InterPro" id="IPR005227">
    <property type="entry name" value="YqgF"/>
</dbReference>
<dbReference type="InterPro" id="IPR006641">
    <property type="entry name" value="YqgF/RNaseH-like_dom"/>
</dbReference>
<dbReference type="InterPro" id="IPR037027">
    <property type="entry name" value="YqgF/RNaseH-like_dom_sf"/>
</dbReference>
<dbReference type="NCBIfam" id="TIGR00250">
    <property type="entry name" value="RNAse_H_YqgF"/>
    <property type="match status" value="1"/>
</dbReference>
<dbReference type="PANTHER" id="PTHR33317">
    <property type="entry name" value="POLYNUCLEOTIDYL TRANSFERASE, RIBONUCLEASE H-LIKE SUPERFAMILY PROTEIN"/>
    <property type="match status" value="1"/>
</dbReference>
<dbReference type="PANTHER" id="PTHR33317:SF4">
    <property type="entry name" value="POLYNUCLEOTIDYL TRANSFERASE, RIBONUCLEASE H-LIKE SUPERFAMILY PROTEIN"/>
    <property type="match status" value="1"/>
</dbReference>
<dbReference type="Pfam" id="PF03652">
    <property type="entry name" value="RuvX"/>
    <property type="match status" value="1"/>
</dbReference>
<dbReference type="SMART" id="SM00732">
    <property type="entry name" value="YqgFc"/>
    <property type="match status" value="1"/>
</dbReference>
<dbReference type="SUPFAM" id="SSF53098">
    <property type="entry name" value="Ribonuclease H-like"/>
    <property type="match status" value="1"/>
</dbReference>
<name>YQGF_FRACC</name>
<evidence type="ECO:0000255" key="1">
    <source>
        <dbReference type="HAMAP-Rule" id="MF_00651"/>
    </source>
</evidence>
<evidence type="ECO:0000256" key="2">
    <source>
        <dbReference type="SAM" id="MobiDB-lite"/>
    </source>
</evidence>
<accession>Q2J822</accession>
<proteinExistence type="inferred from homology"/>
<feature type="chain" id="PRO_0000257537" description="Putative pre-16S rRNA nuclease">
    <location>
        <begin position="1"/>
        <end position="202"/>
    </location>
</feature>
<feature type="region of interest" description="Disordered" evidence="2">
    <location>
        <begin position="1"/>
        <end position="27"/>
    </location>
</feature>
<feature type="region of interest" description="Disordered" evidence="2">
    <location>
        <begin position="170"/>
        <end position="202"/>
    </location>
</feature>
<feature type="compositionally biased region" description="Basic and acidic residues" evidence="2">
    <location>
        <begin position="9"/>
        <end position="20"/>
    </location>
</feature>
<organism>
    <name type="scientific">Frankia casuarinae (strain DSM 45818 / CECT 9043 / HFP020203 / CcI3)</name>
    <dbReference type="NCBI Taxonomy" id="106370"/>
    <lineage>
        <taxon>Bacteria</taxon>
        <taxon>Bacillati</taxon>
        <taxon>Actinomycetota</taxon>
        <taxon>Actinomycetes</taxon>
        <taxon>Frankiales</taxon>
        <taxon>Frankiaceae</taxon>
        <taxon>Frankia</taxon>
    </lineage>
</organism>
<sequence>MSGSGSRPGDSRPGDSRPGDSRPGVRIGVDVGSVRVGVAASDPGGVLAVPVTTLARDRRGNADIDQLVLIVRERQAVEVVVGLPRQMSGQEGRAVRLVRQYAEVLAERIAPVPVRFVDERLTTVAAHRRMAERGVRSRARRSLVDQEAAVQILQHDLDSRRGSAAPGVIGCAAPAAGPDGVVRAPRDGPRAPDGVVPPSDER</sequence>
<reference key="1">
    <citation type="journal article" date="2007" name="Genome Res.">
        <title>Genome characteristics of facultatively symbiotic Frankia sp. strains reflect host range and host plant biogeography.</title>
        <authorList>
            <person name="Normand P."/>
            <person name="Lapierre P."/>
            <person name="Tisa L.S."/>
            <person name="Gogarten J.P."/>
            <person name="Alloisio N."/>
            <person name="Bagnarol E."/>
            <person name="Bassi C.A."/>
            <person name="Berry A.M."/>
            <person name="Bickhart D.M."/>
            <person name="Choisne N."/>
            <person name="Couloux A."/>
            <person name="Cournoyer B."/>
            <person name="Cruveiller S."/>
            <person name="Daubin V."/>
            <person name="Demange N."/>
            <person name="Francino M.P."/>
            <person name="Goltsman E."/>
            <person name="Huang Y."/>
            <person name="Kopp O.R."/>
            <person name="Labarre L."/>
            <person name="Lapidus A."/>
            <person name="Lavire C."/>
            <person name="Marechal J."/>
            <person name="Martinez M."/>
            <person name="Mastronunzio J.E."/>
            <person name="Mullin B.C."/>
            <person name="Niemann J."/>
            <person name="Pujic P."/>
            <person name="Rawnsley T."/>
            <person name="Rouy Z."/>
            <person name="Schenowitz C."/>
            <person name="Sellstedt A."/>
            <person name="Tavares F."/>
            <person name="Tomkins J.P."/>
            <person name="Vallenet D."/>
            <person name="Valverde C."/>
            <person name="Wall L.G."/>
            <person name="Wang Y."/>
            <person name="Medigue C."/>
            <person name="Benson D.R."/>
        </authorList>
    </citation>
    <scope>NUCLEOTIDE SEQUENCE [LARGE SCALE GENOMIC DNA]</scope>
    <source>
        <strain>DSM 45818 / CECT 9043 / HFP020203 / CcI3</strain>
    </source>
</reference>
<protein>
    <recommendedName>
        <fullName evidence="1">Putative pre-16S rRNA nuclease</fullName>
        <ecNumber evidence="1">3.1.-.-</ecNumber>
    </recommendedName>
</protein>
<comment type="function">
    <text evidence="1">Could be a nuclease involved in processing of the 5'-end of pre-16S rRNA.</text>
</comment>
<comment type="subcellular location">
    <subcellularLocation>
        <location evidence="1">Cytoplasm</location>
    </subcellularLocation>
</comment>
<comment type="similarity">
    <text evidence="1">Belongs to the YqgF nuclease family.</text>
</comment>